<organism>
    <name type="scientific">Cereibacter sphaeroides (strain KD131 / KCTC 12085)</name>
    <name type="common">Rhodobacter sphaeroides</name>
    <dbReference type="NCBI Taxonomy" id="557760"/>
    <lineage>
        <taxon>Bacteria</taxon>
        <taxon>Pseudomonadati</taxon>
        <taxon>Pseudomonadota</taxon>
        <taxon>Alphaproteobacteria</taxon>
        <taxon>Rhodobacterales</taxon>
        <taxon>Paracoccaceae</taxon>
        <taxon>Cereibacter</taxon>
    </lineage>
</organism>
<dbReference type="EC" id="2.1.1.222" evidence="1"/>
<dbReference type="EC" id="2.1.1.64" evidence="1"/>
<dbReference type="EMBL" id="CP001150">
    <property type="protein sequence ID" value="ACM02432.1"/>
    <property type="molecule type" value="Genomic_DNA"/>
</dbReference>
<dbReference type="RefSeq" id="WP_009563213.1">
    <property type="nucleotide sequence ID" value="NC_011963.1"/>
</dbReference>
<dbReference type="SMR" id="B9KPP7"/>
<dbReference type="GeneID" id="67447949"/>
<dbReference type="KEGG" id="rsk:RSKD131_2572"/>
<dbReference type="HOGENOM" id="CLU_042432_0_0_5"/>
<dbReference type="UniPathway" id="UPA00232"/>
<dbReference type="GO" id="GO:0102208">
    <property type="term" value="F:2-polyprenyl-6-hydroxyphenol methylase activity"/>
    <property type="evidence" value="ECO:0007669"/>
    <property type="project" value="UniProtKB-EC"/>
</dbReference>
<dbReference type="GO" id="GO:0061542">
    <property type="term" value="F:3-demethylubiquinol 3-O-methyltransferase activity"/>
    <property type="evidence" value="ECO:0007669"/>
    <property type="project" value="UniProtKB-UniRule"/>
</dbReference>
<dbReference type="GO" id="GO:0010420">
    <property type="term" value="F:polyprenyldihydroxybenzoate methyltransferase activity"/>
    <property type="evidence" value="ECO:0007669"/>
    <property type="project" value="InterPro"/>
</dbReference>
<dbReference type="GO" id="GO:0032259">
    <property type="term" value="P:methylation"/>
    <property type="evidence" value="ECO:0007669"/>
    <property type="project" value="UniProtKB-KW"/>
</dbReference>
<dbReference type="CDD" id="cd02440">
    <property type="entry name" value="AdoMet_MTases"/>
    <property type="match status" value="1"/>
</dbReference>
<dbReference type="Gene3D" id="3.40.50.150">
    <property type="entry name" value="Vaccinia Virus protein VP39"/>
    <property type="match status" value="1"/>
</dbReference>
<dbReference type="HAMAP" id="MF_00472">
    <property type="entry name" value="UbiG"/>
    <property type="match status" value="1"/>
</dbReference>
<dbReference type="InterPro" id="IPR029063">
    <property type="entry name" value="SAM-dependent_MTases_sf"/>
</dbReference>
<dbReference type="InterPro" id="IPR010233">
    <property type="entry name" value="UbiG_MeTrfase"/>
</dbReference>
<dbReference type="NCBIfam" id="TIGR01983">
    <property type="entry name" value="UbiG"/>
    <property type="match status" value="1"/>
</dbReference>
<dbReference type="PANTHER" id="PTHR43464">
    <property type="entry name" value="METHYLTRANSFERASE"/>
    <property type="match status" value="1"/>
</dbReference>
<dbReference type="PANTHER" id="PTHR43464:SF19">
    <property type="entry name" value="UBIQUINONE BIOSYNTHESIS O-METHYLTRANSFERASE, MITOCHONDRIAL"/>
    <property type="match status" value="1"/>
</dbReference>
<dbReference type="Pfam" id="PF13489">
    <property type="entry name" value="Methyltransf_23"/>
    <property type="match status" value="1"/>
</dbReference>
<dbReference type="SUPFAM" id="SSF53335">
    <property type="entry name" value="S-adenosyl-L-methionine-dependent methyltransferases"/>
    <property type="match status" value="1"/>
</dbReference>
<reference key="1">
    <citation type="journal article" date="2009" name="J. Bacteriol.">
        <title>Complete genome sequence of Rhodobacter sphaeroides KD131.</title>
        <authorList>
            <person name="Lim S.-K."/>
            <person name="Kim S.J."/>
            <person name="Cha S.H."/>
            <person name="Oh Y.-K."/>
            <person name="Rhee H.-J."/>
            <person name="Kim M.-S."/>
            <person name="Lee J.K."/>
        </authorList>
    </citation>
    <scope>NUCLEOTIDE SEQUENCE [LARGE SCALE GENOMIC DNA]</scope>
    <source>
        <strain>KD131 / KCTC 12085</strain>
    </source>
</reference>
<sequence>MESSSTIDPAEVAKFEAMAAEWWNPHGKFKPLHQMNPCRLDYITQQIAAEFDRDLSAPLPFEGLRLLDIGCGGGLLSEPMARLGAEVIGADAAPRNIPVAKLHAEQSGLAIDYRNTTAEALAAAGERFDVVLNMEVVEHVADPLAYLTACRELLKPGGLMICSTLNRNPKSFAMAIVGAEWVMRWLPKGTHDWSKFITPDELYDLIRKAGLDPVDRKGMVFNPVSWSWSLSARDLSVNYVTASVRRT</sequence>
<comment type="function">
    <text evidence="1">O-methyltransferase that catalyzes the 2 O-methylation steps in the ubiquinone biosynthetic pathway.</text>
</comment>
<comment type="catalytic activity">
    <reaction evidence="1">
        <text>a 3-demethylubiquinol + S-adenosyl-L-methionine = a ubiquinol + S-adenosyl-L-homocysteine + H(+)</text>
        <dbReference type="Rhea" id="RHEA:44380"/>
        <dbReference type="Rhea" id="RHEA-COMP:9566"/>
        <dbReference type="Rhea" id="RHEA-COMP:10914"/>
        <dbReference type="ChEBI" id="CHEBI:15378"/>
        <dbReference type="ChEBI" id="CHEBI:17976"/>
        <dbReference type="ChEBI" id="CHEBI:57856"/>
        <dbReference type="ChEBI" id="CHEBI:59789"/>
        <dbReference type="ChEBI" id="CHEBI:84422"/>
        <dbReference type="EC" id="2.1.1.64"/>
    </reaction>
</comment>
<comment type="catalytic activity">
    <reaction evidence="1">
        <text>a 3-(all-trans-polyprenyl)benzene-1,2-diol + S-adenosyl-L-methionine = a 2-methoxy-6-(all-trans-polyprenyl)phenol + S-adenosyl-L-homocysteine + H(+)</text>
        <dbReference type="Rhea" id="RHEA:31411"/>
        <dbReference type="Rhea" id="RHEA-COMP:9550"/>
        <dbReference type="Rhea" id="RHEA-COMP:9551"/>
        <dbReference type="ChEBI" id="CHEBI:15378"/>
        <dbReference type="ChEBI" id="CHEBI:57856"/>
        <dbReference type="ChEBI" id="CHEBI:59789"/>
        <dbReference type="ChEBI" id="CHEBI:62729"/>
        <dbReference type="ChEBI" id="CHEBI:62731"/>
        <dbReference type="EC" id="2.1.1.222"/>
    </reaction>
</comment>
<comment type="pathway">
    <text evidence="1">Cofactor biosynthesis; ubiquinone biosynthesis.</text>
</comment>
<comment type="similarity">
    <text evidence="1">Belongs to the methyltransferase superfamily. UbiG/COQ3 family.</text>
</comment>
<name>UBIG_CERSK</name>
<evidence type="ECO:0000255" key="1">
    <source>
        <dbReference type="HAMAP-Rule" id="MF_00472"/>
    </source>
</evidence>
<protein>
    <recommendedName>
        <fullName evidence="1">Ubiquinone biosynthesis O-methyltransferase</fullName>
    </recommendedName>
    <alternativeName>
        <fullName evidence="1">2-polyprenyl-6-hydroxyphenol methylase</fullName>
        <ecNumber evidence="1">2.1.1.222</ecNumber>
    </alternativeName>
    <alternativeName>
        <fullName evidence="1">3-demethylubiquinone 3-O-methyltransferase</fullName>
        <ecNumber evidence="1">2.1.1.64</ecNumber>
    </alternativeName>
</protein>
<accession>B9KPP7</accession>
<gene>
    <name evidence="1" type="primary">ubiG</name>
    <name type="ordered locus">RSKD131_2572</name>
</gene>
<proteinExistence type="inferred from homology"/>
<feature type="chain" id="PRO_1000135510" description="Ubiquinone biosynthesis O-methyltransferase">
    <location>
        <begin position="1"/>
        <end position="247"/>
    </location>
</feature>
<feature type="binding site" evidence="1">
    <location>
        <position position="39"/>
    </location>
    <ligand>
        <name>S-adenosyl-L-methionine</name>
        <dbReference type="ChEBI" id="CHEBI:59789"/>
    </ligand>
</feature>
<feature type="binding site" evidence="1">
    <location>
        <position position="70"/>
    </location>
    <ligand>
        <name>S-adenosyl-L-methionine</name>
        <dbReference type="ChEBI" id="CHEBI:59789"/>
    </ligand>
</feature>
<feature type="binding site" evidence="1">
    <location>
        <position position="91"/>
    </location>
    <ligand>
        <name>S-adenosyl-L-methionine</name>
        <dbReference type="ChEBI" id="CHEBI:59789"/>
    </ligand>
</feature>
<feature type="binding site" evidence="1">
    <location>
        <position position="134"/>
    </location>
    <ligand>
        <name>S-adenosyl-L-methionine</name>
        <dbReference type="ChEBI" id="CHEBI:59789"/>
    </ligand>
</feature>
<keyword id="KW-0489">Methyltransferase</keyword>
<keyword id="KW-0949">S-adenosyl-L-methionine</keyword>
<keyword id="KW-0808">Transferase</keyword>
<keyword id="KW-0831">Ubiquinone biosynthesis</keyword>